<sequence>MLSFLAALSLPLALVNAYANPGTCNGNCWAHDPGLWKHDDGRYFLFSTGNGIHISSAPSLQGPWTEVGYALPDGSSINHDGNKNLWAPDVHKGDDGKYYMYYSVSTLGSQNSVIGVASSTTMEPGSWTDHGSTGLSSDGSQGYNTIDANWIKIGDQQVLNFGSYWQGLYQIDLAGPLKIGTAAPVNIAYNATGQHAIEASFLYQQNGFYYLFFSSGKANGYDTSFPAQGEEYRINVCRSSTGRGDFVDKNGVSCLQSGGTTVLASHDNVYGPGGQGVLEDNGAVLYYHYAPRNGDLSVSSYQFGWNRLNWVDGWPTV</sequence>
<reference key="1">
    <citation type="journal article" date="2005" name="Nature">
        <title>Genome sequencing and analysis of Aspergillus oryzae.</title>
        <authorList>
            <person name="Machida M."/>
            <person name="Asai K."/>
            <person name="Sano M."/>
            <person name="Tanaka T."/>
            <person name="Kumagai T."/>
            <person name="Terai G."/>
            <person name="Kusumoto K."/>
            <person name="Arima T."/>
            <person name="Akita O."/>
            <person name="Kashiwagi Y."/>
            <person name="Abe K."/>
            <person name="Gomi K."/>
            <person name="Horiuchi H."/>
            <person name="Kitamoto K."/>
            <person name="Kobayashi T."/>
            <person name="Takeuchi M."/>
            <person name="Denning D.W."/>
            <person name="Galagan J.E."/>
            <person name="Nierman W.C."/>
            <person name="Yu J."/>
            <person name="Archer D.B."/>
            <person name="Bennett J.W."/>
            <person name="Bhatnagar D."/>
            <person name="Cleveland T.E."/>
            <person name="Fedorova N.D."/>
            <person name="Gotoh O."/>
            <person name="Horikawa H."/>
            <person name="Hosoyama A."/>
            <person name="Ichinomiya M."/>
            <person name="Igarashi R."/>
            <person name="Iwashita K."/>
            <person name="Juvvadi P.R."/>
            <person name="Kato M."/>
            <person name="Kato Y."/>
            <person name="Kin T."/>
            <person name="Kokubun A."/>
            <person name="Maeda H."/>
            <person name="Maeyama N."/>
            <person name="Maruyama J."/>
            <person name="Nagasaki H."/>
            <person name="Nakajima T."/>
            <person name="Oda K."/>
            <person name="Okada K."/>
            <person name="Paulsen I."/>
            <person name="Sakamoto K."/>
            <person name="Sawano T."/>
            <person name="Takahashi M."/>
            <person name="Takase K."/>
            <person name="Terabayashi Y."/>
            <person name="Wortman J.R."/>
            <person name="Yamada O."/>
            <person name="Yamagata Y."/>
            <person name="Anazawa H."/>
            <person name="Hata Y."/>
            <person name="Koide Y."/>
            <person name="Komori T."/>
            <person name="Koyama Y."/>
            <person name="Minetoki T."/>
            <person name="Suharnan S."/>
            <person name="Tanaka A."/>
            <person name="Isono K."/>
            <person name="Kuhara S."/>
            <person name="Ogasawara N."/>
            <person name="Kikuchi H."/>
        </authorList>
    </citation>
    <scope>NUCLEOTIDE SEQUENCE [LARGE SCALE GENOMIC DNA]</scope>
    <source>
        <strain>ATCC 42149 / RIB 40</strain>
    </source>
</reference>
<name>ABNC_ASPOR</name>
<protein>
    <recommendedName>
        <fullName>Probable arabinan endo-1,5-alpha-L-arabinosidase C</fullName>
        <ecNumber>3.2.1.99</ecNumber>
    </recommendedName>
    <alternativeName>
        <fullName>Endo-1,5-alpha-L-arabinanase C</fullName>
        <shortName>ABN C</shortName>
    </alternativeName>
</protein>
<dbReference type="EC" id="3.2.1.99"/>
<dbReference type="EMBL" id="BA000054">
    <property type="protein sequence ID" value="BAE64437.1"/>
    <property type="molecule type" value="Genomic_DNA"/>
</dbReference>
<dbReference type="RefSeq" id="XP_001825570.1">
    <property type="nucleotide sequence ID" value="XM_001825518.2"/>
</dbReference>
<dbReference type="SMR" id="Q2U1X8"/>
<dbReference type="STRING" id="510516.Q2U1X8"/>
<dbReference type="CAZy" id="GH43">
    <property type="family name" value="Glycoside Hydrolase Family 43"/>
</dbReference>
<dbReference type="GlyCosmos" id="Q2U1X8">
    <property type="glycosylation" value="1 site, No reported glycans"/>
</dbReference>
<dbReference type="EnsemblFungi" id="BAE64437">
    <property type="protein sequence ID" value="BAE64437"/>
    <property type="gene ID" value="AO090138000055"/>
</dbReference>
<dbReference type="GeneID" id="5997671"/>
<dbReference type="KEGG" id="aor:AO090138000055"/>
<dbReference type="HOGENOM" id="CLU_009397_5_0_1"/>
<dbReference type="OMA" id="EDYQFGW"/>
<dbReference type="OrthoDB" id="2625at5052"/>
<dbReference type="UniPathway" id="UPA00667"/>
<dbReference type="Proteomes" id="UP000006564">
    <property type="component" value="Chromosome 6"/>
</dbReference>
<dbReference type="GO" id="GO:0005576">
    <property type="term" value="C:extracellular region"/>
    <property type="evidence" value="ECO:0007669"/>
    <property type="project" value="UniProtKB-SubCell"/>
</dbReference>
<dbReference type="GO" id="GO:0046558">
    <property type="term" value="F:arabinan endo-1,5-alpha-L-arabinosidase activity"/>
    <property type="evidence" value="ECO:0007669"/>
    <property type="project" value="UniProtKB-EC"/>
</dbReference>
<dbReference type="GO" id="GO:0031222">
    <property type="term" value="P:arabinan catabolic process"/>
    <property type="evidence" value="ECO:0007669"/>
    <property type="project" value="UniProtKB-UniPathway"/>
</dbReference>
<dbReference type="GO" id="GO:0045493">
    <property type="term" value="P:xylan catabolic process"/>
    <property type="evidence" value="ECO:0007669"/>
    <property type="project" value="UniProtKB-KW"/>
</dbReference>
<dbReference type="CDD" id="cd18831">
    <property type="entry name" value="GH43_AnAbnA-like"/>
    <property type="match status" value="1"/>
</dbReference>
<dbReference type="Gene3D" id="2.115.10.20">
    <property type="entry name" value="Glycosyl hydrolase domain, family 43"/>
    <property type="match status" value="1"/>
</dbReference>
<dbReference type="InterPro" id="IPR050727">
    <property type="entry name" value="GH43_arabinanases"/>
</dbReference>
<dbReference type="InterPro" id="IPR006710">
    <property type="entry name" value="Glyco_hydro_43"/>
</dbReference>
<dbReference type="InterPro" id="IPR016840">
    <property type="entry name" value="Glyco_hydro_43_endo_a_Ara-ase"/>
</dbReference>
<dbReference type="InterPro" id="IPR023296">
    <property type="entry name" value="Glyco_hydro_beta-prop_sf"/>
</dbReference>
<dbReference type="PANTHER" id="PTHR43301">
    <property type="entry name" value="ARABINAN ENDO-1,5-ALPHA-L-ARABINOSIDASE"/>
    <property type="match status" value="1"/>
</dbReference>
<dbReference type="PANTHER" id="PTHR43301:SF7">
    <property type="entry name" value="ARABINAN ENDO-1,5-ALPHA-L-ARABINOSIDASE C"/>
    <property type="match status" value="1"/>
</dbReference>
<dbReference type="Pfam" id="PF04616">
    <property type="entry name" value="Glyco_hydro_43"/>
    <property type="match status" value="1"/>
</dbReference>
<dbReference type="PIRSF" id="PIRSF026534">
    <property type="entry name" value="Endo_alpha-L-arabinosidase"/>
    <property type="match status" value="1"/>
</dbReference>
<dbReference type="SUPFAM" id="SSF75005">
    <property type="entry name" value="Arabinanase/levansucrase/invertase"/>
    <property type="match status" value="1"/>
</dbReference>
<accession>Q2U1X8</accession>
<comment type="function">
    <text evidence="1">Endo-1,5-alpha-L-arabinanase involved in degradation of pectin. Its preferred substrate is linear 1,5-alpha-L-arabinan (By similarity).</text>
</comment>
<comment type="catalytic activity">
    <reaction>
        <text>Endohydrolysis of (1-&gt;5)-alpha-arabinofuranosidic linkages in (1-&gt;5)-arabinans.</text>
        <dbReference type="EC" id="3.2.1.99"/>
    </reaction>
</comment>
<comment type="pathway">
    <text>Glycan metabolism; L-arabinan degradation.</text>
</comment>
<comment type="subcellular location">
    <subcellularLocation>
        <location evidence="1">Secreted</location>
    </subcellularLocation>
</comment>
<comment type="similarity">
    <text evidence="4">Belongs to the glycosyl hydrolase 43 family.</text>
</comment>
<gene>
    <name type="primary">abnC</name>
    <name type="ORF">AO090138000055</name>
</gene>
<feature type="signal peptide" evidence="3">
    <location>
        <begin position="1"/>
        <end position="17"/>
    </location>
</feature>
<feature type="chain" id="PRO_0000394636" description="Probable arabinan endo-1,5-alpha-L-arabinosidase C">
    <location>
        <begin position="18"/>
        <end position="317"/>
    </location>
</feature>
<feature type="active site" description="Proton acceptor" evidence="2">
    <location>
        <position position="32"/>
    </location>
</feature>
<feature type="active site" description="Proton donor" evidence="2">
    <location>
        <position position="198"/>
    </location>
</feature>
<feature type="site" description="Important for catalytic activity, responsible for pKa modulation of the active site Glu and correct orientation of both the proton donor and substrate" evidence="2">
    <location>
        <position position="147"/>
    </location>
</feature>
<feature type="glycosylation site" description="N-linked (GlcNAc...) asparagine" evidence="3">
    <location>
        <position position="190"/>
    </location>
</feature>
<organism>
    <name type="scientific">Aspergillus oryzae (strain ATCC 42149 / RIB 40)</name>
    <name type="common">Yellow koji mold</name>
    <dbReference type="NCBI Taxonomy" id="510516"/>
    <lineage>
        <taxon>Eukaryota</taxon>
        <taxon>Fungi</taxon>
        <taxon>Dikarya</taxon>
        <taxon>Ascomycota</taxon>
        <taxon>Pezizomycotina</taxon>
        <taxon>Eurotiomycetes</taxon>
        <taxon>Eurotiomycetidae</taxon>
        <taxon>Eurotiales</taxon>
        <taxon>Aspergillaceae</taxon>
        <taxon>Aspergillus</taxon>
        <taxon>Aspergillus subgen. Circumdati</taxon>
    </lineage>
</organism>
<evidence type="ECO:0000250" key="1"/>
<evidence type="ECO:0000250" key="2">
    <source>
        <dbReference type="UniProtKB" id="P94522"/>
    </source>
</evidence>
<evidence type="ECO:0000255" key="3"/>
<evidence type="ECO:0000305" key="4"/>
<keyword id="KW-0119">Carbohydrate metabolism</keyword>
<keyword id="KW-0325">Glycoprotein</keyword>
<keyword id="KW-0326">Glycosidase</keyword>
<keyword id="KW-0378">Hydrolase</keyword>
<keyword id="KW-0624">Polysaccharide degradation</keyword>
<keyword id="KW-1185">Reference proteome</keyword>
<keyword id="KW-0964">Secreted</keyword>
<keyword id="KW-0732">Signal</keyword>
<keyword id="KW-0858">Xylan degradation</keyword>
<proteinExistence type="inferred from homology"/>